<organism>
    <name type="scientific">Rhodospirillum rubrum (strain ATCC 11170 / ATH 1.1.1 / DSM 467 / LMG 4362 / NCIMB 8255 / S1)</name>
    <dbReference type="NCBI Taxonomy" id="269796"/>
    <lineage>
        <taxon>Bacteria</taxon>
        <taxon>Pseudomonadati</taxon>
        <taxon>Pseudomonadota</taxon>
        <taxon>Alphaproteobacteria</taxon>
        <taxon>Rhodospirillales</taxon>
        <taxon>Rhodospirillaceae</taxon>
        <taxon>Rhodospirillum</taxon>
    </lineage>
</organism>
<dbReference type="EMBL" id="CP000230">
    <property type="protein sequence ID" value="ABC24309.1"/>
    <property type="molecule type" value="Genomic_DNA"/>
</dbReference>
<dbReference type="RefSeq" id="WP_011391262.1">
    <property type="nucleotide sequence ID" value="NC_007643.1"/>
</dbReference>
<dbReference type="RefSeq" id="YP_428596.1">
    <property type="nucleotide sequence ID" value="NC_007643.1"/>
</dbReference>
<dbReference type="SMR" id="Q2RNI6"/>
<dbReference type="STRING" id="269796.Rru_A3515"/>
<dbReference type="EnsemblBacteria" id="ABC24309">
    <property type="protein sequence ID" value="ABC24309"/>
    <property type="gene ID" value="Rru_A3515"/>
</dbReference>
<dbReference type="KEGG" id="rru:Rru_A3515"/>
<dbReference type="PATRIC" id="fig|269796.9.peg.3632"/>
<dbReference type="eggNOG" id="COG3279">
    <property type="taxonomic scope" value="Bacteria"/>
</dbReference>
<dbReference type="HOGENOM" id="CLU_097085_0_0_5"/>
<dbReference type="PhylomeDB" id="Q2RNI6"/>
<dbReference type="Proteomes" id="UP000001929">
    <property type="component" value="Chromosome"/>
</dbReference>
<dbReference type="GO" id="GO:0003677">
    <property type="term" value="F:DNA binding"/>
    <property type="evidence" value="ECO:0007669"/>
    <property type="project" value="UniProtKB-KW"/>
</dbReference>
<dbReference type="GO" id="GO:0046872">
    <property type="term" value="F:metal ion binding"/>
    <property type="evidence" value="ECO:0007669"/>
    <property type="project" value="UniProtKB-KW"/>
</dbReference>
<dbReference type="GO" id="GO:0000156">
    <property type="term" value="F:phosphorelay response regulator activity"/>
    <property type="evidence" value="ECO:0007669"/>
    <property type="project" value="InterPro"/>
</dbReference>
<dbReference type="GO" id="GO:0009399">
    <property type="term" value="P:nitrogen fixation"/>
    <property type="evidence" value="ECO:0007669"/>
    <property type="project" value="UniProtKB-KW"/>
</dbReference>
<dbReference type="GO" id="GO:0045893">
    <property type="term" value="P:positive regulation of DNA-templated transcription"/>
    <property type="evidence" value="ECO:0000315"/>
    <property type="project" value="UniProtKB"/>
</dbReference>
<dbReference type="GO" id="GO:0006808">
    <property type="term" value="P:regulation of nitrogen utilization"/>
    <property type="evidence" value="ECO:0000315"/>
    <property type="project" value="UniProtKB"/>
</dbReference>
<dbReference type="CDD" id="cd00130">
    <property type="entry name" value="PAS"/>
    <property type="match status" value="1"/>
</dbReference>
<dbReference type="Gene3D" id="2.40.50.1020">
    <property type="entry name" value="LytTr DNA-binding domain"/>
    <property type="match status" value="1"/>
</dbReference>
<dbReference type="Gene3D" id="3.30.450.20">
    <property type="entry name" value="PAS domain"/>
    <property type="match status" value="1"/>
</dbReference>
<dbReference type="InterPro" id="IPR046947">
    <property type="entry name" value="LytR-like"/>
</dbReference>
<dbReference type="InterPro" id="IPR007492">
    <property type="entry name" value="LytTR_DNA-bd_dom"/>
</dbReference>
<dbReference type="InterPro" id="IPR000014">
    <property type="entry name" value="PAS"/>
</dbReference>
<dbReference type="InterPro" id="IPR035965">
    <property type="entry name" value="PAS-like_dom_sf"/>
</dbReference>
<dbReference type="PANTHER" id="PTHR37299:SF1">
    <property type="entry name" value="STAGE 0 SPORULATION PROTEIN A HOMOLOG"/>
    <property type="match status" value="1"/>
</dbReference>
<dbReference type="PANTHER" id="PTHR37299">
    <property type="entry name" value="TRANSCRIPTIONAL REGULATOR-RELATED"/>
    <property type="match status" value="1"/>
</dbReference>
<dbReference type="Pfam" id="PF04397">
    <property type="entry name" value="LytTR"/>
    <property type="match status" value="1"/>
</dbReference>
<dbReference type="SMART" id="SM00850">
    <property type="entry name" value="LytTR"/>
    <property type="match status" value="1"/>
</dbReference>
<dbReference type="SUPFAM" id="SSF55785">
    <property type="entry name" value="PYP-like sensor domain (PAS domain)"/>
    <property type="match status" value="1"/>
</dbReference>
<dbReference type="PROSITE" id="PS50930">
    <property type="entry name" value="HTH_LYTTR"/>
    <property type="match status" value="1"/>
</dbReference>
<accession>Q2RNI6</accession>
<proteinExistence type="evidence at protein level"/>
<gene>
    <name type="primary">rcoM</name>
    <name type="ordered locus">Rru_A3515</name>
</gene>
<sequence length="236" mass="24974">MDDFAYNLRRAETGVLLLADDLTVTAVSPGALSLLGLDKPGALLGRPILDLHPPPLRPKVAVLLKTARGPSGPAATAVLSLRGGPVLIRASALTGQGETAFALVLTAVGESRETKEGPSARPAPPGYLRKVPLGLGETTEFVDTAGVIYLEADGHYSRVHTAFGHSFCPLALAELERRLDPDQFLRVHRSYIVALAHVRAFRKRESGGLLVMDTGAGDLVPIGRAQVTRLRGLLAI</sequence>
<name>RCOM_RHORT</name>
<feature type="chain" id="PRO_0000407277" description="CO-responsive transcriptional regulator RcoM">
    <location>
        <begin position="1"/>
        <end position="236"/>
    </location>
</feature>
<feature type="domain" description="PAS">
    <location>
        <begin position="1"/>
        <end position="64"/>
    </location>
</feature>
<feature type="domain" description="HTH LytTR-type" evidence="2">
    <location>
        <begin position="131"/>
        <end position="236"/>
    </location>
</feature>
<feature type="binding site" description="axial binding residue" evidence="1">
    <location>
        <position position="52"/>
    </location>
    <ligand>
        <name>heme</name>
        <dbReference type="ChEBI" id="CHEBI:30413"/>
    </ligand>
    <ligandPart>
        <name>Fe</name>
        <dbReference type="ChEBI" id="CHEBI:18248"/>
    </ligandPart>
</feature>
<protein>
    <recommendedName>
        <fullName>CO-responsive transcriptional regulator RcoM</fullName>
    </recommendedName>
</protein>
<reference key="1">
    <citation type="journal article" date="2011" name="Stand. Genomic Sci.">
        <title>Complete genome sequence of Rhodospirillum rubrum type strain (S1).</title>
        <authorList>
            <person name="Munk A.C."/>
            <person name="Copeland A."/>
            <person name="Lucas S."/>
            <person name="Lapidus A."/>
            <person name="Del Rio T.G."/>
            <person name="Barry K."/>
            <person name="Detter J.C."/>
            <person name="Hammon N."/>
            <person name="Israni S."/>
            <person name="Pitluck S."/>
            <person name="Brettin T."/>
            <person name="Bruce D."/>
            <person name="Han C."/>
            <person name="Tapia R."/>
            <person name="Gilna P."/>
            <person name="Schmutz J."/>
            <person name="Larimer F."/>
            <person name="Land M."/>
            <person name="Kyrpides N.C."/>
            <person name="Mavromatis K."/>
            <person name="Richardson P."/>
            <person name="Rohde M."/>
            <person name="Goeker M."/>
            <person name="Klenk H.P."/>
            <person name="Zhang Y."/>
            <person name="Roberts G.P."/>
            <person name="Reslewic S."/>
            <person name="Schwartz D.C."/>
        </authorList>
    </citation>
    <scope>NUCLEOTIDE SEQUENCE [LARGE SCALE GENOMIC DNA]</scope>
    <source>
        <strain>ATCC 11170 / ATH 1.1.1 / DSM 467 / LMG 4362 / NCIMB 8255 / S1</strain>
    </source>
</reference>
<reference key="2">
    <citation type="journal article" date="2011" name="J. Bacteriol.">
        <title>Sustaining N2-dependent growth in the presence of CO.</title>
        <authorList>
            <person name="Kerby R.L."/>
            <person name="Roberts G.P."/>
        </authorList>
    </citation>
    <scope>FUNCTION AS A TRANSCRIPTIONAL ACTIVATOR</scope>
    <scope>DISRUPTION PHENOTYPE</scope>
    <scope>GENE NAME</scope>
</reference>
<comment type="function">
    <text evidence="3">Activates the expression of the CowN protein in response to carbon monoxide (CO). Is required to sustain N(2)-dependent growth in the presence of low levels of carbon monoxide (CO).</text>
</comment>
<comment type="cofactor">
    <cofactor evidence="1">
        <name>heme</name>
        <dbReference type="ChEBI" id="CHEBI:30413"/>
    </cofactor>
    <text evidence="1">Binds 1 heme group per subunit.</text>
</comment>
<comment type="domain">
    <text evidence="1">The N-terminal sensor (heme-containing) domain is covalently linked to the C-terminal, DNA-binding response domain.</text>
</comment>
<comment type="disruption phenotype">
    <text evidence="3">Strains lacking this gene are not able to grow with N(2) as a nitrogen source in the presence of CO.</text>
</comment>
<evidence type="ECO:0000250" key="1"/>
<evidence type="ECO:0000255" key="2">
    <source>
        <dbReference type="PROSITE-ProRule" id="PRU00112"/>
    </source>
</evidence>
<evidence type="ECO:0000269" key="3">
    <source>
    </source>
</evidence>
<keyword id="KW-0010">Activator</keyword>
<keyword id="KW-0238">DNA-binding</keyword>
<keyword id="KW-0349">Heme</keyword>
<keyword id="KW-0408">Iron</keyword>
<keyword id="KW-0479">Metal-binding</keyword>
<keyword id="KW-0535">Nitrogen fixation</keyword>
<keyword id="KW-1185">Reference proteome</keyword>
<keyword id="KW-0804">Transcription</keyword>
<keyword id="KW-0805">Transcription regulation</keyword>